<feature type="chain" id="PRO_1000145233" description="Urease accessory protein UreG">
    <location>
        <begin position="1"/>
        <end position="204"/>
    </location>
</feature>
<feature type="binding site" evidence="1">
    <location>
        <begin position="11"/>
        <end position="18"/>
    </location>
    <ligand>
        <name>GTP</name>
        <dbReference type="ChEBI" id="CHEBI:37565"/>
    </ligand>
</feature>
<dbReference type="EMBL" id="BX571857">
    <property type="protein sequence ID" value="CAG43994.1"/>
    <property type="molecule type" value="Genomic_DNA"/>
</dbReference>
<dbReference type="RefSeq" id="WP_000002969.1">
    <property type="nucleotide sequence ID" value="NC_002953.3"/>
</dbReference>
<dbReference type="SMR" id="Q6G729"/>
<dbReference type="KEGG" id="sas:SAS2183"/>
<dbReference type="HOGENOM" id="CLU_072144_1_0_9"/>
<dbReference type="GO" id="GO:0005737">
    <property type="term" value="C:cytoplasm"/>
    <property type="evidence" value="ECO:0007669"/>
    <property type="project" value="UniProtKB-SubCell"/>
</dbReference>
<dbReference type="GO" id="GO:0005525">
    <property type="term" value="F:GTP binding"/>
    <property type="evidence" value="ECO:0007669"/>
    <property type="project" value="UniProtKB-KW"/>
</dbReference>
<dbReference type="GO" id="GO:0003924">
    <property type="term" value="F:GTPase activity"/>
    <property type="evidence" value="ECO:0007669"/>
    <property type="project" value="InterPro"/>
</dbReference>
<dbReference type="GO" id="GO:0016151">
    <property type="term" value="F:nickel cation binding"/>
    <property type="evidence" value="ECO:0007669"/>
    <property type="project" value="UniProtKB-UniRule"/>
</dbReference>
<dbReference type="GO" id="GO:0043419">
    <property type="term" value="P:urea catabolic process"/>
    <property type="evidence" value="ECO:0007669"/>
    <property type="project" value="InterPro"/>
</dbReference>
<dbReference type="CDD" id="cd05540">
    <property type="entry name" value="UreG"/>
    <property type="match status" value="1"/>
</dbReference>
<dbReference type="Gene3D" id="3.40.50.300">
    <property type="entry name" value="P-loop containing nucleotide triphosphate hydrolases"/>
    <property type="match status" value="1"/>
</dbReference>
<dbReference type="HAMAP" id="MF_01389">
    <property type="entry name" value="UreG"/>
    <property type="match status" value="1"/>
</dbReference>
<dbReference type="InterPro" id="IPR003495">
    <property type="entry name" value="CobW/HypB/UreG_nucleotide-bd"/>
</dbReference>
<dbReference type="InterPro" id="IPR027417">
    <property type="entry name" value="P-loop_NTPase"/>
</dbReference>
<dbReference type="InterPro" id="IPR004400">
    <property type="entry name" value="UreG"/>
</dbReference>
<dbReference type="NCBIfam" id="TIGR00101">
    <property type="entry name" value="ureG"/>
    <property type="match status" value="1"/>
</dbReference>
<dbReference type="PANTHER" id="PTHR31715">
    <property type="entry name" value="UREASE ACCESSORY PROTEIN G"/>
    <property type="match status" value="1"/>
</dbReference>
<dbReference type="PANTHER" id="PTHR31715:SF0">
    <property type="entry name" value="UREASE ACCESSORY PROTEIN G"/>
    <property type="match status" value="1"/>
</dbReference>
<dbReference type="Pfam" id="PF02492">
    <property type="entry name" value="cobW"/>
    <property type="match status" value="1"/>
</dbReference>
<dbReference type="PIRSF" id="PIRSF005624">
    <property type="entry name" value="Ni-bind_GTPase"/>
    <property type="match status" value="1"/>
</dbReference>
<dbReference type="SUPFAM" id="SSF52540">
    <property type="entry name" value="P-loop containing nucleoside triphosphate hydrolases"/>
    <property type="match status" value="1"/>
</dbReference>
<name>UREG_STAAS</name>
<evidence type="ECO:0000255" key="1">
    <source>
        <dbReference type="HAMAP-Rule" id="MF_01389"/>
    </source>
</evidence>
<protein>
    <recommendedName>
        <fullName evidence="1">Urease accessory protein UreG</fullName>
    </recommendedName>
</protein>
<reference key="1">
    <citation type="journal article" date="2004" name="Proc. Natl. Acad. Sci. U.S.A.">
        <title>Complete genomes of two clinical Staphylococcus aureus strains: evidence for the rapid evolution of virulence and drug resistance.</title>
        <authorList>
            <person name="Holden M.T.G."/>
            <person name="Feil E.J."/>
            <person name="Lindsay J.A."/>
            <person name="Peacock S.J."/>
            <person name="Day N.P.J."/>
            <person name="Enright M.C."/>
            <person name="Foster T.J."/>
            <person name="Moore C.E."/>
            <person name="Hurst L."/>
            <person name="Atkin R."/>
            <person name="Barron A."/>
            <person name="Bason N."/>
            <person name="Bentley S.D."/>
            <person name="Chillingworth C."/>
            <person name="Chillingworth T."/>
            <person name="Churcher C."/>
            <person name="Clark L."/>
            <person name="Corton C."/>
            <person name="Cronin A."/>
            <person name="Doggett J."/>
            <person name="Dowd L."/>
            <person name="Feltwell T."/>
            <person name="Hance Z."/>
            <person name="Harris B."/>
            <person name="Hauser H."/>
            <person name="Holroyd S."/>
            <person name="Jagels K."/>
            <person name="James K.D."/>
            <person name="Lennard N."/>
            <person name="Line A."/>
            <person name="Mayes R."/>
            <person name="Moule S."/>
            <person name="Mungall K."/>
            <person name="Ormond D."/>
            <person name="Quail M.A."/>
            <person name="Rabbinowitsch E."/>
            <person name="Rutherford K.M."/>
            <person name="Sanders M."/>
            <person name="Sharp S."/>
            <person name="Simmonds M."/>
            <person name="Stevens K."/>
            <person name="Whitehead S."/>
            <person name="Barrell B.G."/>
            <person name="Spratt B.G."/>
            <person name="Parkhill J."/>
        </authorList>
    </citation>
    <scope>NUCLEOTIDE SEQUENCE [LARGE SCALE GENOMIC DNA]</scope>
    <source>
        <strain>MSSA476</strain>
    </source>
</reference>
<gene>
    <name evidence="1" type="primary">ureG</name>
    <name type="ordered locus">SAS2183</name>
</gene>
<organism>
    <name type="scientific">Staphylococcus aureus (strain MSSA476)</name>
    <dbReference type="NCBI Taxonomy" id="282459"/>
    <lineage>
        <taxon>Bacteria</taxon>
        <taxon>Bacillati</taxon>
        <taxon>Bacillota</taxon>
        <taxon>Bacilli</taxon>
        <taxon>Bacillales</taxon>
        <taxon>Staphylococcaceae</taxon>
        <taxon>Staphylococcus</taxon>
    </lineage>
</organism>
<keyword id="KW-0143">Chaperone</keyword>
<keyword id="KW-0963">Cytoplasm</keyword>
<keyword id="KW-0342">GTP-binding</keyword>
<keyword id="KW-0996">Nickel insertion</keyword>
<keyword id="KW-0547">Nucleotide-binding</keyword>
<comment type="function">
    <text evidence="1">Facilitates the functional incorporation of the urease nickel metallocenter. This process requires GTP hydrolysis, probably effectuated by UreG.</text>
</comment>
<comment type="subunit">
    <text evidence="1">Homodimer. UreD, UreF and UreG form a complex that acts as a GTP-hydrolysis-dependent molecular chaperone, activating the urease apoprotein by helping to assemble the nickel containing metallocenter of UreC. The UreE protein probably delivers the nickel.</text>
</comment>
<comment type="subcellular location">
    <subcellularLocation>
        <location evidence="1">Cytoplasm</location>
    </subcellularLocation>
</comment>
<comment type="similarity">
    <text evidence="1">Belongs to the SIMIBI class G3E GTPase family. UreG subfamily.</text>
</comment>
<proteinExistence type="inferred from homology"/>
<accession>Q6G729</accession>
<sequence>MANPIKIGIGGPVGAGKTQLIEKVVKRLSKEMSIGVITNDIYTKEDEKILVNSGVLPESRIIGVETGGCPHTAIREDASMNFAAIDELLERHDDIELIFIESGGDNLAATFSPELVDFSIYIIDVAQGEKIPRKGGQGMIKSDFFIINKTDLAPYVGASLEQMAEDTKVFRGKRPFTFTNLKTDEGLDEVIDWIERDTLLKGLS</sequence>